<sequence length="372" mass="42391">MIPGSTSGISFSRILSRQASHQDATQHTDAQQAEIQQAAEDSSPGAEVQKFVQSTDEMSAALAQFRNRRDYEKKSSNLSNSFERVLEDEALPKAKQILKLISVHGGALEDFLRQARSLFPDPSDLVLVLRELLRRKDLEEIVRKKLESLLKHVEEQTDPKTLKAGINCALKARLFGKTLSLKPGLLRASYRQFIQSESHEVEIYSDWIASYGYQRRLVVLDFIEGSLLTDIDANDASCSRLEFGQLLRRLTQLKMLRSADLLFVSTLLSYSFTKAFNAEESSWLLLMLSLLQQPHEVDSLLADIIGLNALLLSHKEHASFLQIFYQVCKAIPSSLFYEEYWQEELLMALRSMTDIAYKHEMAEQRRTIEKLS</sequence>
<protein>
    <recommendedName>
        <fullName>Invasion protein InvE</fullName>
    </recommendedName>
</protein>
<organism>
    <name type="scientific">Salmonella typhi</name>
    <dbReference type="NCBI Taxonomy" id="90370"/>
    <lineage>
        <taxon>Bacteria</taxon>
        <taxon>Pseudomonadati</taxon>
        <taxon>Pseudomonadota</taxon>
        <taxon>Gammaproteobacteria</taxon>
        <taxon>Enterobacterales</taxon>
        <taxon>Enterobacteriaceae</taxon>
        <taxon>Salmonella</taxon>
    </lineage>
</organism>
<gene>
    <name type="primary">invE</name>
    <name type="ordered locus">STY3020</name>
    <name type="ordered locus">t2799</name>
</gene>
<accession>Q56052</accession>
<accession>Q7C7M6</accession>
<accession>Q8Z490</accession>
<evidence type="ECO:0000250" key="1"/>
<evidence type="ECO:0000256" key="2">
    <source>
        <dbReference type="SAM" id="MobiDB-lite"/>
    </source>
</evidence>
<comment type="function">
    <text evidence="1">Involved in the triggering of intracellular events that lead to microbial internalization. These events include increase in calcium level, redistribution of actin microfilaments, and changes in the normal structure of the microvilli. Encoded within the type III secretion system (SPI-1 T3SS), it is essential for the translocation of protein effectors into host cells. Forms a complex with SipB and SipC in the presence of their chaperone SicA (By similarity).</text>
</comment>
<comment type="subcellular location">
    <subcellularLocation>
        <location evidence="1">Cell membrane</location>
        <topology evidence="1">Peripheral membrane protein</topology>
    </subcellularLocation>
    <text evidence="1">Probably associated with a bacterial membrane-localized protein.</text>
</comment>
<feature type="chain" id="PRO_0000084210" description="Invasion protein InvE">
    <location>
        <begin position="1"/>
        <end position="372"/>
    </location>
</feature>
<feature type="region of interest" description="Disordered" evidence="2">
    <location>
        <begin position="1"/>
        <end position="47"/>
    </location>
</feature>
<feature type="compositionally biased region" description="Polar residues" evidence="2">
    <location>
        <begin position="1"/>
        <end position="19"/>
    </location>
</feature>
<feature type="compositionally biased region" description="Low complexity" evidence="2">
    <location>
        <begin position="21"/>
        <end position="40"/>
    </location>
</feature>
<feature type="sequence variant" description="In strain: RKS3333.">
    <original>Q</original>
    <variation>E</variation>
    <location>
        <position position="64"/>
    </location>
</feature>
<feature type="sequence variant" description="In strain: RKS3333.">
    <original>S</original>
    <variation>T</variation>
    <location>
        <position position="372"/>
    </location>
</feature>
<reference key="1">
    <citation type="journal article" date="1996" name="Appl. Environ. Microbiol.">
        <title>Molecular genetic relationships of the salmonellae.</title>
        <authorList>
            <person name="Boyd E.F."/>
            <person name="Wang F.-S."/>
            <person name="Whittam T.S."/>
            <person name="Selander R.K."/>
        </authorList>
    </citation>
    <scope>NUCLEOTIDE SEQUENCE [GENOMIC DNA]</scope>
    <source>
        <strain>RKS3333</strain>
    </source>
</reference>
<reference key="2">
    <citation type="journal article" date="2001" name="Nature">
        <title>Complete genome sequence of a multiple drug resistant Salmonella enterica serovar Typhi CT18.</title>
        <authorList>
            <person name="Parkhill J."/>
            <person name="Dougan G."/>
            <person name="James K.D."/>
            <person name="Thomson N.R."/>
            <person name="Pickard D."/>
            <person name="Wain J."/>
            <person name="Churcher C.M."/>
            <person name="Mungall K.L."/>
            <person name="Bentley S.D."/>
            <person name="Holden M.T.G."/>
            <person name="Sebaihia M."/>
            <person name="Baker S."/>
            <person name="Basham D."/>
            <person name="Brooks K."/>
            <person name="Chillingworth T."/>
            <person name="Connerton P."/>
            <person name="Cronin A."/>
            <person name="Davis P."/>
            <person name="Davies R.M."/>
            <person name="Dowd L."/>
            <person name="White N."/>
            <person name="Farrar J."/>
            <person name="Feltwell T."/>
            <person name="Hamlin N."/>
            <person name="Haque A."/>
            <person name="Hien T.T."/>
            <person name="Holroyd S."/>
            <person name="Jagels K."/>
            <person name="Krogh A."/>
            <person name="Larsen T.S."/>
            <person name="Leather S."/>
            <person name="Moule S."/>
            <person name="O'Gaora P."/>
            <person name="Parry C."/>
            <person name="Quail M.A."/>
            <person name="Rutherford K.M."/>
            <person name="Simmonds M."/>
            <person name="Skelton J."/>
            <person name="Stevens K."/>
            <person name="Whitehead S."/>
            <person name="Barrell B.G."/>
        </authorList>
    </citation>
    <scope>NUCLEOTIDE SEQUENCE [LARGE SCALE GENOMIC DNA]</scope>
    <source>
        <strain>CT18</strain>
    </source>
</reference>
<reference key="3">
    <citation type="journal article" date="2003" name="J. Bacteriol.">
        <title>Comparative genomics of Salmonella enterica serovar Typhi strains Ty2 and CT18.</title>
        <authorList>
            <person name="Deng W."/>
            <person name="Liou S.-R."/>
            <person name="Plunkett G. III"/>
            <person name="Mayhew G.F."/>
            <person name="Rose D.J."/>
            <person name="Burland V."/>
            <person name="Kodoyianni V."/>
            <person name="Schwartz D.C."/>
            <person name="Blattner F.R."/>
        </authorList>
    </citation>
    <scope>NUCLEOTIDE SEQUENCE [LARGE SCALE GENOMIC DNA]</scope>
    <source>
        <strain>ATCC 700931 / Ty2</strain>
    </source>
</reference>
<dbReference type="EMBL" id="U43274">
    <property type="protein sequence ID" value="AAC45058.1"/>
    <property type="molecule type" value="Genomic_DNA"/>
</dbReference>
<dbReference type="EMBL" id="AL513382">
    <property type="protein sequence ID" value="CAD06004.1"/>
    <property type="molecule type" value="Genomic_DNA"/>
</dbReference>
<dbReference type="EMBL" id="AE014613">
    <property type="protein sequence ID" value="AAO70360.1"/>
    <property type="molecule type" value="Genomic_DNA"/>
</dbReference>
<dbReference type="RefSeq" id="NP_457291.1">
    <property type="nucleotide sequence ID" value="NC_003198.1"/>
</dbReference>
<dbReference type="RefSeq" id="WP_000612166.1">
    <property type="nucleotide sequence ID" value="NZ_WSUR01000005.1"/>
</dbReference>
<dbReference type="SMR" id="Q56052"/>
<dbReference type="STRING" id="220341.gene:17586914"/>
<dbReference type="KEGG" id="stt:t2799"/>
<dbReference type="KEGG" id="sty:STY3020"/>
<dbReference type="PATRIC" id="fig|220341.7.peg.3074"/>
<dbReference type="eggNOG" id="ENOG502ZABZ">
    <property type="taxonomic scope" value="Bacteria"/>
</dbReference>
<dbReference type="HOGENOM" id="CLU_056140_1_0_6"/>
<dbReference type="OMA" id="PKMGDDP"/>
<dbReference type="OrthoDB" id="7028879at2"/>
<dbReference type="PHI-base" id="PHI:648"/>
<dbReference type="Proteomes" id="UP000000541">
    <property type="component" value="Chromosome"/>
</dbReference>
<dbReference type="Proteomes" id="UP000002670">
    <property type="component" value="Chromosome"/>
</dbReference>
<dbReference type="GO" id="GO:0009986">
    <property type="term" value="C:cell surface"/>
    <property type="evidence" value="ECO:0007669"/>
    <property type="project" value="InterPro"/>
</dbReference>
<dbReference type="GO" id="GO:0019867">
    <property type="term" value="C:outer membrane"/>
    <property type="evidence" value="ECO:0007669"/>
    <property type="project" value="InterPro"/>
</dbReference>
<dbReference type="GO" id="GO:0005886">
    <property type="term" value="C:plasma membrane"/>
    <property type="evidence" value="ECO:0007669"/>
    <property type="project" value="UniProtKB-SubCell"/>
</dbReference>
<dbReference type="GO" id="GO:0050709">
    <property type="term" value="P:negative regulation of protein secretion"/>
    <property type="evidence" value="ECO:0007669"/>
    <property type="project" value="InterPro"/>
</dbReference>
<dbReference type="GO" id="GO:0030254">
    <property type="term" value="P:protein secretion by the type III secretion system"/>
    <property type="evidence" value="ECO:0007669"/>
    <property type="project" value="InterPro"/>
</dbReference>
<dbReference type="Gene3D" id="1.10.150.630">
    <property type="match status" value="1"/>
</dbReference>
<dbReference type="Gene3D" id="1.20.1280.240">
    <property type="match status" value="1"/>
</dbReference>
<dbReference type="InterPro" id="IPR010812">
    <property type="entry name" value="HrpJ-like"/>
</dbReference>
<dbReference type="InterPro" id="IPR003520">
    <property type="entry name" value="Invas_InvE"/>
</dbReference>
<dbReference type="InterPro" id="IPR013401">
    <property type="entry name" value="T3SS_LcrE"/>
</dbReference>
<dbReference type="NCBIfam" id="TIGR02568">
    <property type="entry name" value="LcrE"/>
    <property type="match status" value="1"/>
</dbReference>
<dbReference type="NCBIfam" id="NF011866">
    <property type="entry name" value="PRK15338.1"/>
    <property type="match status" value="1"/>
</dbReference>
<dbReference type="Pfam" id="PF07201">
    <property type="entry name" value="HrpJ"/>
    <property type="match status" value="1"/>
</dbReference>
<dbReference type="PRINTS" id="PR01344">
    <property type="entry name" value="INVEPROTEIN"/>
</dbReference>
<dbReference type="SUPFAM" id="SSF140591">
    <property type="entry name" value="Type III secretion system domain"/>
    <property type="match status" value="1"/>
</dbReference>
<proteinExistence type="inferred from homology"/>
<keyword id="KW-1003">Cell membrane</keyword>
<keyword id="KW-0472">Membrane</keyword>
<keyword id="KW-0843">Virulence</keyword>
<name>INVE_SALTI</name>